<gene>
    <name evidence="1" type="primary">rdgC</name>
    <name type="ordered locus">ETA_25550</name>
</gene>
<dbReference type="EMBL" id="CU468135">
    <property type="protein sequence ID" value="CAO97601.1"/>
    <property type="molecule type" value="Genomic_DNA"/>
</dbReference>
<dbReference type="RefSeq" id="WP_012442266.1">
    <property type="nucleotide sequence ID" value="NC_010694.1"/>
</dbReference>
<dbReference type="SMR" id="B2VIS2"/>
<dbReference type="STRING" id="465817.ETA_25550"/>
<dbReference type="KEGG" id="eta:ETA_25550"/>
<dbReference type="eggNOG" id="COG2974">
    <property type="taxonomic scope" value="Bacteria"/>
</dbReference>
<dbReference type="HOGENOM" id="CLU_052038_1_1_6"/>
<dbReference type="OrthoDB" id="5290530at2"/>
<dbReference type="Proteomes" id="UP000001726">
    <property type="component" value="Chromosome"/>
</dbReference>
<dbReference type="GO" id="GO:0043590">
    <property type="term" value="C:bacterial nucleoid"/>
    <property type="evidence" value="ECO:0007669"/>
    <property type="project" value="TreeGrafter"/>
</dbReference>
<dbReference type="GO" id="GO:0005737">
    <property type="term" value="C:cytoplasm"/>
    <property type="evidence" value="ECO:0007669"/>
    <property type="project" value="UniProtKB-UniRule"/>
</dbReference>
<dbReference type="GO" id="GO:0003690">
    <property type="term" value="F:double-stranded DNA binding"/>
    <property type="evidence" value="ECO:0007669"/>
    <property type="project" value="TreeGrafter"/>
</dbReference>
<dbReference type="GO" id="GO:0006310">
    <property type="term" value="P:DNA recombination"/>
    <property type="evidence" value="ECO:0007669"/>
    <property type="project" value="UniProtKB-UniRule"/>
</dbReference>
<dbReference type="GO" id="GO:0000018">
    <property type="term" value="P:regulation of DNA recombination"/>
    <property type="evidence" value="ECO:0007669"/>
    <property type="project" value="TreeGrafter"/>
</dbReference>
<dbReference type="HAMAP" id="MF_00194">
    <property type="entry name" value="RdgC"/>
    <property type="match status" value="1"/>
</dbReference>
<dbReference type="InterPro" id="IPR007476">
    <property type="entry name" value="RdgC"/>
</dbReference>
<dbReference type="NCBIfam" id="NF001460">
    <property type="entry name" value="PRK00321.1-1"/>
    <property type="match status" value="1"/>
</dbReference>
<dbReference type="NCBIfam" id="NF001462">
    <property type="entry name" value="PRK00321.1-3"/>
    <property type="match status" value="1"/>
</dbReference>
<dbReference type="NCBIfam" id="NF001464">
    <property type="entry name" value="PRK00321.1-5"/>
    <property type="match status" value="1"/>
</dbReference>
<dbReference type="PANTHER" id="PTHR38103">
    <property type="entry name" value="RECOMBINATION-ASSOCIATED PROTEIN RDGC"/>
    <property type="match status" value="1"/>
</dbReference>
<dbReference type="PANTHER" id="PTHR38103:SF1">
    <property type="entry name" value="RECOMBINATION-ASSOCIATED PROTEIN RDGC"/>
    <property type="match status" value="1"/>
</dbReference>
<dbReference type="Pfam" id="PF04381">
    <property type="entry name" value="RdgC"/>
    <property type="match status" value="1"/>
</dbReference>
<name>RDGC_ERWT9</name>
<feature type="chain" id="PRO_1000099063" description="Recombination-associated protein RdgC">
    <location>
        <begin position="1"/>
        <end position="303"/>
    </location>
</feature>
<protein>
    <recommendedName>
        <fullName evidence="1">Recombination-associated protein RdgC</fullName>
    </recommendedName>
</protein>
<reference key="1">
    <citation type="journal article" date="2008" name="Environ. Microbiol.">
        <title>The genome of Erwinia tasmaniensis strain Et1/99, a non-pathogenic bacterium in the genus Erwinia.</title>
        <authorList>
            <person name="Kube M."/>
            <person name="Migdoll A.M."/>
            <person name="Mueller I."/>
            <person name="Kuhl H."/>
            <person name="Beck A."/>
            <person name="Reinhardt R."/>
            <person name="Geider K."/>
        </authorList>
    </citation>
    <scope>NUCLEOTIDE SEQUENCE [LARGE SCALE GENOMIC DNA]</scope>
    <source>
        <strain>DSM 17950 / CFBP 7177 / CIP 109463 / NCPPB 4357 / Et1/99</strain>
    </source>
</reference>
<keyword id="KW-0963">Cytoplasm</keyword>
<keyword id="KW-0233">DNA recombination</keyword>
<keyword id="KW-1185">Reference proteome</keyword>
<comment type="function">
    <text evidence="1">May be involved in recombination.</text>
</comment>
<comment type="subcellular location">
    <subcellularLocation>
        <location evidence="1">Cytoplasm</location>
        <location evidence="1">Nucleoid</location>
    </subcellularLocation>
</comment>
<comment type="similarity">
    <text evidence="1">Belongs to the RdgC family.</text>
</comment>
<sequence length="303" mass="33824">MLWFKNLMVYRLNRDIPLVADEMEKQLDAFSFTPCGSQDMAKTGWVSPLGAHGEDLTHVTNGQILICARKEEKMLPSPVIKQALEAKISKLEAEQSRKLKKTEKDSLKDEVLHSLLPRAFSRFSQTCVWIDTVNNLIMVDCASAKKAEDTLALLRKSLGSLPVVPLTLESPIELTLTEWVRSGELPAGFALMDEAELKAILEDGGVIRCKKQDLVCDEIANHIEAGKLVTKLALDWQERIQMILSDDGSIKRLKFSDILREQNDDIDREDVTGRFDADFILMTGELAALISNTVEALGGEAQR</sequence>
<organism>
    <name type="scientific">Erwinia tasmaniensis (strain DSM 17950 / CFBP 7177 / CIP 109463 / NCPPB 4357 / Et1/99)</name>
    <dbReference type="NCBI Taxonomy" id="465817"/>
    <lineage>
        <taxon>Bacteria</taxon>
        <taxon>Pseudomonadati</taxon>
        <taxon>Pseudomonadota</taxon>
        <taxon>Gammaproteobacteria</taxon>
        <taxon>Enterobacterales</taxon>
        <taxon>Erwiniaceae</taxon>
        <taxon>Erwinia</taxon>
    </lineage>
</organism>
<accession>B2VIS2</accession>
<proteinExistence type="inferred from homology"/>
<evidence type="ECO:0000255" key="1">
    <source>
        <dbReference type="HAMAP-Rule" id="MF_00194"/>
    </source>
</evidence>